<dbReference type="EC" id="2.7.7.3" evidence="1"/>
<dbReference type="EMBL" id="CP000577">
    <property type="protein sequence ID" value="ABN76716.1"/>
    <property type="molecule type" value="Genomic_DNA"/>
</dbReference>
<dbReference type="RefSeq" id="WP_002720119.1">
    <property type="nucleotide sequence ID" value="NC_009049.1"/>
</dbReference>
<dbReference type="SMR" id="A3PK50"/>
<dbReference type="GeneID" id="67446701"/>
<dbReference type="KEGG" id="rsh:Rsph17029_1606"/>
<dbReference type="HOGENOM" id="CLU_100149_0_1_5"/>
<dbReference type="UniPathway" id="UPA00241">
    <property type="reaction ID" value="UER00355"/>
</dbReference>
<dbReference type="GO" id="GO:0005737">
    <property type="term" value="C:cytoplasm"/>
    <property type="evidence" value="ECO:0007669"/>
    <property type="project" value="UniProtKB-SubCell"/>
</dbReference>
<dbReference type="GO" id="GO:0005524">
    <property type="term" value="F:ATP binding"/>
    <property type="evidence" value="ECO:0007669"/>
    <property type="project" value="UniProtKB-KW"/>
</dbReference>
<dbReference type="GO" id="GO:0004595">
    <property type="term" value="F:pantetheine-phosphate adenylyltransferase activity"/>
    <property type="evidence" value="ECO:0007669"/>
    <property type="project" value="UniProtKB-UniRule"/>
</dbReference>
<dbReference type="GO" id="GO:0015937">
    <property type="term" value="P:coenzyme A biosynthetic process"/>
    <property type="evidence" value="ECO:0007669"/>
    <property type="project" value="UniProtKB-UniRule"/>
</dbReference>
<dbReference type="CDD" id="cd02163">
    <property type="entry name" value="PPAT"/>
    <property type="match status" value="1"/>
</dbReference>
<dbReference type="Gene3D" id="3.40.50.620">
    <property type="entry name" value="HUPs"/>
    <property type="match status" value="1"/>
</dbReference>
<dbReference type="HAMAP" id="MF_00151">
    <property type="entry name" value="PPAT_bact"/>
    <property type="match status" value="1"/>
</dbReference>
<dbReference type="InterPro" id="IPR004821">
    <property type="entry name" value="Cyt_trans-like"/>
</dbReference>
<dbReference type="InterPro" id="IPR001980">
    <property type="entry name" value="PPAT"/>
</dbReference>
<dbReference type="InterPro" id="IPR014729">
    <property type="entry name" value="Rossmann-like_a/b/a_fold"/>
</dbReference>
<dbReference type="NCBIfam" id="TIGR01510">
    <property type="entry name" value="coaD_prev_kdtB"/>
    <property type="match status" value="1"/>
</dbReference>
<dbReference type="NCBIfam" id="TIGR00125">
    <property type="entry name" value="cyt_tran_rel"/>
    <property type="match status" value="1"/>
</dbReference>
<dbReference type="PANTHER" id="PTHR21342">
    <property type="entry name" value="PHOSPHOPANTETHEINE ADENYLYLTRANSFERASE"/>
    <property type="match status" value="1"/>
</dbReference>
<dbReference type="PANTHER" id="PTHR21342:SF1">
    <property type="entry name" value="PHOSPHOPANTETHEINE ADENYLYLTRANSFERASE"/>
    <property type="match status" value="1"/>
</dbReference>
<dbReference type="Pfam" id="PF01467">
    <property type="entry name" value="CTP_transf_like"/>
    <property type="match status" value="1"/>
</dbReference>
<dbReference type="PRINTS" id="PR01020">
    <property type="entry name" value="LPSBIOSNTHSS"/>
</dbReference>
<dbReference type="SUPFAM" id="SSF52374">
    <property type="entry name" value="Nucleotidylyl transferase"/>
    <property type="match status" value="1"/>
</dbReference>
<gene>
    <name evidence="1" type="primary">coaD</name>
    <name type="ordered locus">Rsph17029_1606</name>
</gene>
<organism>
    <name type="scientific">Cereibacter sphaeroides (strain ATCC 17029 / ATH 2.4.9)</name>
    <name type="common">Rhodobacter sphaeroides</name>
    <dbReference type="NCBI Taxonomy" id="349101"/>
    <lineage>
        <taxon>Bacteria</taxon>
        <taxon>Pseudomonadati</taxon>
        <taxon>Pseudomonadota</taxon>
        <taxon>Alphaproteobacteria</taxon>
        <taxon>Rhodobacterales</taxon>
        <taxon>Paracoccaceae</taxon>
        <taxon>Cereibacter</taxon>
    </lineage>
</organism>
<evidence type="ECO:0000255" key="1">
    <source>
        <dbReference type="HAMAP-Rule" id="MF_00151"/>
    </source>
</evidence>
<protein>
    <recommendedName>
        <fullName evidence="1">Phosphopantetheine adenylyltransferase</fullName>
        <ecNumber evidence="1">2.7.7.3</ecNumber>
    </recommendedName>
    <alternativeName>
        <fullName evidence="1">Dephospho-CoA pyrophosphorylase</fullName>
    </alternativeName>
    <alternativeName>
        <fullName evidence="1">Pantetheine-phosphate adenylyltransferase</fullName>
        <shortName evidence="1">PPAT</shortName>
    </alternativeName>
</protein>
<name>COAD_CERS1</name>
<accession>A3PK50</accession>
<comment type="function">
    <text evidence="1">Reversibly transfers an adenylyl group from ATP to 4'-phosphopantetheine, yielding dephospho-CoA (dPCoA) and pyrophosphate.</text>
</comment>
<comment type="catalytic activity">
    <reaction evidence="1">
        <text>(R)-4'-phosphopantetheine + ATP + H(+) = 3'-dephospho-CoA + diphosphate</text>
        <dbReference type="Rhea" id="RHEA:19801"/>
        <dbReference type="ChEBI" id="CHEBI:15378"/>
        <dbReference type="ChEBI" id="CHEBI:30616"/>
        <dbReference type="ChEBI" id="CHEBI:33019"/>
        <dbReference type="ChEBI" id="CHEBI:57328"/>
        <dbReference type="ChEBI" id="CHEBI:61723"/>
        <dbReference type="EC" id="2.7.7.3"/>
    </reaction>
</comment>
<comment type="cofactor">
    <cofactor evidence="1">
        <name>Mg(2+)</name>
        <dbReference type="ChEBI" id="CHEBI:18420"/>
    </cofactor>
</comment>
<comment type="pathway">
    <text evidence="1">Cofactor biosynthesis; coenzyme A biosynthesis; CoA from (R)-pantothenate: step 4/5.</text>
</comment>
<comment type="subunit">
    <text evidence="1">Homohexamer.</text>
</comment>
<comment type="subcellular location">
    <subcellularLocation>
        <location evidence="1">Cytoplasm</location>
    </subcellularLocation>
</comment>
<comment type="similarity">
    <text evidence="1">Belongs to the bacterial CoaD family.</text>
</comment>
<proteinExistence type="inferred from homology"/>
<reference key="1">
    <citation type="submission" date="2007-02" db="EMBL/GenBank/DDBJ databases">
        <title>Complete sequence of chromosome 1 of Rhodobacter sphaeroides ATCC 17029.</title>
        <authorList>
            <person name="Copeland A."/>
            <person name="Lucas S."/>
            <person name="Lapidus A."/>
            <person name="Barry K."/>
            <person name="Detter J.C."/>
            <person name="Glavina del Rio T."/>
            <person name="Hammon N."/>
            <person name="Israni S."/>
            <person name="Dalin E."/>
            <person name="Tice H."/>
            <person name="Pitluck S."/>
            <person name="Kiss H."/>
            <person name="Brettin T."/>
            <person name="Bruce D."/>
            <person name="Han C."/>
            <person name="Tapia R."/>
            <person name="Gilna P."/>
            <person name="Schmutz J."/>
            <person name="Larimer F."/>
            <person name="Land M."/>
            <person name="Hauser L."/>
            <person name="Kyrpides N."/>
            <person name="Mikhailova N."/>
            <person name="Richardson P."/>
            <person name="Mackenzie C."/>
            <person name="Choudhary M."/>
            <person name="Donohue T.J."/>
            <person name="Kaplan S."/>
        </authorList>
    </citation>
    <scope>NUCLEOTIDE SEQUENCE [LARGE SCALE GENOMIC DNA]</scope>
    <source>
        <strain>ATCC 17029 / ATH 2.4.9</strain>
    </source>
</reference>
<feature type="chain" id="PRO_1000076778" description="Phosphopantetheine adenylyltransferase">
    <location>
        <begin position="1"/>
        <end position="162"/>
    </location>
</feature>
<feature type="binding site" evidence="1">
    <location>
        <begin position="9"/>
        <end position="10"/>
    </location>
    <ligand>
        <name>ATP</name>
        <dbReference type="ChEBI" id="CHEBI:30616"/>
    </ligand>
</feature>
<feature type="binding site" evidence="1">
    <location>
        <position position="9"/>
    </location>
    <ligand>
        <name>substrate</name>
    </ligand>
</feature>
<feature type="binding site" evidence="1">
    <location>
        <position position="17"/>
    </location>
    <ligand>
        <name>ATP</name>
        <dbReference type="ChEBI" id="CHEBI:30616"/>
    </ligand>
</feature>
<feature type="binding site" evidence="1">
    <location>
        <position position="41"/>
    </location>
    <ligand>
        <name>substrate</name>
    </ligand>
</feature>
<feature type="binding site" evidence="1">
    <location>
        <position position="77"/>
    </location>
    <ligand>
        <name>substrate</name>
    </ligand>
</feature>
<feature type="binding site" evidence="1">
    <location>
        <position position="91"/>
    </location>
    <ligand>
        <name>substrate</name>
    </ligand>
</feature>
<feature type="binding site" evidence="1">
    <location>
        <begin position="92"/>
        <end position="94"/>
    </location>
    <ligand>
        <name>ATP</name>
        <dbReference type="ChEBI" id="CHEBI:30616"/>
    </ligand>
</feature>
<feature type="binding site" evidence="1">
    <location>
        <position position="102"/>
    </location>
    <ligand>
        <name>ATP</name>
        <dbReference type="ChEBI" id="CHEBI:30616"/>
    </ligand>
</feature>
<feature type="binding site" evidence="1">
    <location>
        <begin position="127"/>
        <end position="133"/>
    </location>
    <ligand>
        <name>ATP</name>
        <dbReference type="ChEBI" id="CHEBI:30616"/>
    </ligand>
</feature>
<feature type="site" description="Transition state stabilizer" evidence="1">
    <location>
        <position position="17"/>
    </location>
</feature>
<sequence length="162" mass="17659">MRIGLYPGTFDPLTLGHLDIIQRAMALVDRLVIGVAINRDKGPLFSLEERVRMVETECRAIAANGGEIVVHPFENLLIDCARDVGASVIVRGLRAVADFEYEFQMVGMNRALDAGIETVFLMADARRQAIASKLVKEIARLGGDVSSFVTPDVGAALVAKYR</sequence>
<keyword id="KW-0067">ATP-binding</keyword>
<keyword id="KW-0173">Coenzyme A biosynthesis</keyword>
<keyword id="KW-0963">Cytoplasm</keyword>
<keyword id="KW-0460">Magnesium</keyword>
<keyword id="KW-0547">Nucleotide-binding</keyword>
<keyword id="KW-0548">Nucleotidyltransferase</keyword>
<keyword id="KW-0808">Transferase</keyword>